<sequence>METTTKKARSLYIPYAGPVLLEFPLLNKGSAFSVEERRNFNLSGLLPEVVESIEEQAERAWLQYQGFKTEIDKHIYLRNIQDTNETLFYRLVQNHLEEMMPVIYTPTVGAACERFSEIYRRARGVFISYPNRHNMDDILQNVPNHNIKVIVVTDGERILGLGDQGIGGMGIPIGKLSLYTACGGISPAYTLPVVLDVGTNNQQLLNDPLYMGWRHPRITDDEYYAFVDEFIQAVKQRWPDILLQFEDFAQKNAMPLLTRYRDEICSFNDDIQGTAAVTVGTLIAASRAAGSQLSEQKIVFLGAGSAGCGIAEQIIAQTQREGLSEDAARQNVFMVDRFGLLTDRMPNLLPFQAKLVQKCDNLQHWDTENDVLSLLDVVRNVKPDILIGVSGQTGLFTEEIIREMHKHCPRPIVMPLSNPTSRVEATPQDIIAWTEGNALVATGSPFSPVIWKDKVYPIAQCNNAYIFPGIGLGVIASGASRITDEMLMSASETLAKHSPLVNNGEGLVLPALKDIQVVSRAIAFAVGKMAQQQGVAVKTSAEALQQAIDDNFWKPEYRDYRRTSI</sequence>
<keyword id="KW-0479">Metal-binding</keyword>
<keyword id="KW-0520">NAD</keyword>
<keyword id="KW-0560">Oxidoreductase</keyword>
<proteinExistence type="inferred from homology"/>
<gene>
    <name evidence="1" type="primary">maeA</name>
    <name type="ordered locus">SPAB_01733</name>
</gene>
<evidence type="ECO:0000255" key="1">
    <source>
        <dbReference type="HAMAP-Rule" id="MF_01619"/>
    </source>
</evidence>
<protein>
    <recommendedName>
        <fullName evidence="1">NAD-dependent malic enzyme</fullName>
        <shortName evidence="1">NAD-ME</shortName>
        <ecNumber evidence="1">1.1.1.38</ecNumber>
    </recommendedName>
</protein>
<comment type="catalytic activity">
    <reaction evidence="1">
        <text>(S)-malate + NAD(+) = pyruvate + CO2 + NADH</text>
        <dbReference type="Rhea" id="RHEA:12653"/>
        <dbReference type="ChEBI" id="CHEBI:15361"/>
        <dbReference type="ChEBI" id="CHEBI:15589"/>
        <dbReference type="ChEBI" id="CHEBI:16526"/>
        <dbReference type="ChEBI" id="CHEBI:57540"/>
        <dbReference type="ChEBI" id="CHEBI:57945"/>
        <dbReference type="EC" id="1.1.1.38"/>
    </reaction>
</comment>
<comment type="catalytic activity">
    <reaction evidence="1">
        <text>oxaloacetate + H(+) = pyruvate + CO2</text>
        <dbReference type="Rhea" id="RHEA:15641"/>
        <dbReference type="ChEBI" id="CHEBI:15361"/>
        <dbReference type="ChEBI" id="CHEBI:15378"/>
        <dbReference type="ChEBI" id="CHEBI:16452"/>
        <dbReference type="ChEBI" id="CHEBI:16526"/>
        <dbReference type="EC" id="1.1.1.38"/>
    </reaction>
</comment>
<comment type="cofactor">
    <cofactor evidence="1">
        <name>Mg(2+)</name>
        <dbReference type="ChEBI" id="CHEBI:18420"/>
    </cofactor>
    <cofactor evidence="1">
        <name>Mn(2+)</name>
        <dbReference type="ChEBI" id="CHEBI:29035"/>
    </cofactor>
    <text evidence="1">Divalent metal cations. Prefers magnesium or manganese.</text>
</comment>
<comment type="subunit">
    <text evidence="1">Homotetramer.</text>
</comment>
<comment type="similarity">
    <text evidence="1">Belongs to the malic enzymes family.</text>
</comment>
<dbReference type="EC" id="1.1.1.38" evidence="1"/>
<dbReference type="EMBL" id="CP000886">
    <property type="protein sequence ID" value="ABX67126.1"/>
    <property type="molecule type" value="Genomic_DNA"/>
</dbReference>
<dbReference type="RefSeq" id="WP_000450511.1">
    <property type="nucleotide sequence ID" value="NC_010102.1"/>
</dbReference>
<dbReference type="SMR" id="A9MYU8"/>
<dbReference type="KEGG" id="spq:SPAB_01733"/>
<dbReference type="PATRIC" id="fig|1016998.12.peg.1632"/>
<dbReference type="HOGENOM" id="CLU_011405_5_2_6"/>
<dbReference type="BioCyc" id="SENT1016998:SPAB_RS07015-MONOMER"/>
<dbReference type="Proteomes" id="UP000008556">
    <property type="component" value="Chromosome"/>
</dbReference>
<dbReference type="GO" id="GO:0005829">
    <property type="term" value="C:cytosol"/>
    <property type="evidence" value="ECO:0007669"/>
    <property type="project" value="TreeGrafter"/>
</dbReference>
<dbReference type="GO" id="GO:0004471">
    <property type="term" value="F:malate dehydrogenase (decarboxylating) (NAD+) activity"/>
    <property type="evidence" value="ECO:0007669"/>
    <property type="project" value="UniProtKB-UniRule"/>
</dbReference>
<dbReference type="GO" id="GO:0046872">
    <property type="term" value="F:metal ion binding"/>
    <property type="evidence" value="ECO:0007669"/>
    <property type="project" value="UniProtKB-KW"/>
</dbReference>
<dbReference type="GO" id="GO:0051287">
    <property type="term" value="F:NAD binding"/>
    <property type="evidence" value="ECO:0007669"/>
    <property type="project" value="InterPro"/>
</dbReference>
<dbReference type="GO" id="GO:0008948">
    <property type="term" value="F:oxaloacetate decarboxylase activity"/>
    <property type="evidence" value="ECO:0007669"/>
    <property type="project" value="UniProtKB-UniRule"/>
</dbReference>
<dbReference type="GO" id="GO:0006108">
    <property type="term" value="P:malate metabolic process"/>
    <property type="evidence" value="ECO:0007669"/>
    <property type="project" value="TreeGrafter"/>
</dbReference>
<dbReference type="CDD" id="cd05312">
    <property type="entry name" value="NAD_bind_1_malic_enz"/>
    <property type="match status" value="1"/>
</dbReference>
<dbReference type="FunFam" id="3.40.50.10380:FF:000001">
    <property type="entry name" value="NAD-dependent malic enzyme"/>
    <property type="match status" value="1"/>
</dbReference>
<dbReference type="FunFam" id="3.40.50.720:FF:000055">
    <property type="entry name" value="NAD-dependent malic enzyme"/>
    <property type="match status" value="1"/>
</dbReference>
<dbReference type="Gene3D" id="3.40.50.10380">
    <property type="entry name" value="Malic enzyme, N-terminal domain"/>
    <property type="match status" value="1"/>
</dbReference>
<dbReference type="Gene3D" id="3.40.50.720">
    <property type="entry name" value="NAD(P)-binding Rossmann-like Domain"/>
    <property type="match status" value="1"/>
</dbReference>
<dbReference type="HAMAP" id="MF_01619">
    <property type="entry name" value="NAD_malic_enz"/>
    <property type="match status" value="1"/>
</dbReference>
<dbReference type="InterPro" id="IPR046346">
    <property type="entry name" value="Aminoacid_DH-like_N_sf"/>
</dbReference>
<dbReference type="InterPro" id="IPR015884">
    <property type="entry name" value="Malic_enzyme_CS"/>
</dbReference>
<dbReference type="InterPro" id="IPR012301">
    <property type="entry name" value="Malic_N_dom"/>
</dbReference>
<dbReference type="InterPro" id="IPR037062">
    <property type="entry name" value="Malic_N_dom_sf"/>
</dbReference>
<dbReference type="InterPro" id="IPR012302">
    <property type="entry name" value="Malic_NAD-bd"/>
</dbReference>
<dbReference type="InterPro" id="IPR001891">
    <property type="entry name" value="Malic_OxRdtase"/>
</dbReference>
<dbReference type="InterPro" id="IPR036291">
    <property type="entry name" value="NAD(P)-bd_dom_sf"/>
</dbReference>
<dbReference type="InterPro" id="IPR023667">
    <property type="entry name" value="NAD_malic_enz_proteobac"/>
</dbReference>
<dbReference type="NCBIfam" id="NF010052">
    <property type="entry name" value="PRK13529.1"/>
    <property type="match status" value="1"/>
</dbReference>
<dbReference type="PANTHER" id="PTHR23406">
    <property type="entry name" value="MALIC ENZYME-RELATED"/>
    <property type="match status" value="1"/>
</dbReference>
<dbReference type="PANTHER" id="PTHR23406:SF34">
    <property type="entry name" value="NAD-DEPENDENT MALIC ENZYME, MITOCHONDRIAL"/>
    <property type="match status" value="1"/>
</dbReference>
<dbReference type="Pfam" id="PF00390">
    <property type="entry name" value="malic"/>
    <property type="match status" value="1"/>
</dbReference>
<dbReference type="Pfam" id="PF03949">
    <property type="entry name" value="Malic_M"/>
    <property type="match status" value="1"/>
</dbReference>
<dbReference type="PIRSF" id="PIRSF000106">
    <property type="entry name" value="ME"/>
    <property type="match status" value="1"/>
</dbReference>
<dbReference type="PRINTS" id="PR00072">
    <property type="entry name" value="MALOXRDTASE"/>
</dbReference>
<dbReference type="SMART" id="SM01274">
    <property type="entry name" value="malic"/>
    <property type="match status" value="1"/>
</dbReference>
<dbReference type="SMART" id="SM00919">
    <property type="entry name" value="Malic_M"/>
    <property type="match status" value="1"/>
</dbReference>
<dbReference type="SUPFAM" id="SSF53223">
    <property type="entry name" value="Aminoacid dehydrogenase-like, N-terminal domain"/>
    <property type="match status" value="1"/>
</dbReference>
<dbReference type="SUPFAM" id="SSF51735">
    <property type="entry name" value="NAD(P)-binding Rossmann-fold domains"/>
    <property type="match status" value="1"/>
</dbReference>
<dbReference type="PROSITE" id="PS00331">
    <property type="entry name" value="MALIC_ENZYMES"/>
    <property type="match status" value="1"/>
</dbReference>
<organism>
    <name type="scientific">Salmonella paratyphi B (strain ATCC BAA-1250 / SPB7)</name>
    <dbReference type="NCBI Taxonomy" id="1016998"/>
    <lineage>
        <taxon>Bacteria</taxon>
        <taxon>Pseudomonadati</taxon>
        <taxon>Pseudomonadota</taxon>
        <taxon>Gammaproteobacteria</taxon>
        <taxon>Enterobacterales</taxon>
        <taxon>Enterobacteriaceae</taxon>
        <taxon>Salmonella</taxon>
    </lineage>
</organism>
<accession>A9MYU8</accession>
<feature type="chain" id="PRO_1000088073" description="NAD-dependent malic enzyme">
    <location>
        <begin position="1"/>
        <end position="565"/>
    </location>
</feature>
<feature type="active site" description="Proton donor" evidence="1">
    <location>
        <position position="104"/>
    </location>
</feature>
<feature type="active site" description="Proton acceptor" evidence="1">
    <location>
        <position position="175"/>
    </location>
</feature>
<feature type="binding site" evidence="1">
    <location>
        <position position="157"/>
    </location>
    <ligand>
        <name>NAD(+)</name>
        <dbReference type="ChEBI" id="CHEBI:57540"/>
    </ligand>
</feature>
<feature type="binding site" evidence="1">
    <location>
        <position position="246"/>
    </location>
    <ligand>
        <name>a divalent metal cation</name>
        <dbReference type="ChEBI" id="CHEBI:60240"/>
    </ligand>
</feature>
<feature type="binding site" evidence="1">
    <location>
        <position position="247"/>
    </location>
    <ligand>
        <name>a divalent metal cation</name>
        <dbReference type="ChEBI" id="CHEBI:60240"/>
    </ligand>
</feature>
<feature type="binding site" evidence="1">
    <location>
        <position position="270"/>
    </location>
    <ligand>
        <name>a divalent metal cation</name>
        <dbReference type="ChEBI" id="CHEBI:60240"/>
    </ligand>
</feature>
<feature type="binding site" evidence="1">
    <location>
        <position position="270"/>
    </location>
    <ligand>
        <name>NAD(+)</name>
        <dbReference type="ChEBI" id="CHEBI:57540"/>
    </ligand>
</feature>
<feature type="binding site" evidence="1">
    <location>
        <position position="418"/>
    </location>
    <ligand>
        <name>NAD(+)</name>
        <dbReference type="ChEBI" id="CHEBI:57540"/>
    </ligand>
</feature>
<feature type="site" description="Important for activity" evidence="1">
    <location>
        <position position="270"/>
    </location>
</feature>
<name>MAO1_SALPB</name>
<reference key="1">
    <citation type="submission" date="2007-11" db="EMBL/GenBank/DDBJ databases">
        <authorList>
            <consortium name="The Salmonella enterica serovar Paratyphi B Genome Sequencing Project"/>
            <person name="McClelland M."/>
            <person name="Sanderson E.K."/>
            <person name="Porwollik S."/>
            <person name="Spieth J."/>
            <person name="Clifton W.S."/>
            <person name="Fulton R."/>
            <person name="Cordes M."/>
            <person name="Wollam A."/>
            <person name="Shah N."/>
            <person name="Pepin K."/>
            <person name="Bhonagiri V."/>
            <person name="Nash W."/>
            <person name="Johnson M."/>
            <person name="Thiruvilangam P."/>
            <person name="Wilson R."/>
        </authorList>
    </citation>
    <scope>NUCLEOTIDE SEQUENCE [LARGE SCALE GENOMIC DNA]</scope>
    <source>
        <strain>ATCC BAA-1250 / SPB7</strain>
    </source>
</reference>